<comment type="function">
    <text evidence="4">Component of the oleanane-type triterpene saponins (e.g. saponarioside A and saponarioside B) biosynthetic pathway, leading to the production of natural products with detergent properties used as traditional sources of soap (PubMed:39043959). An oxidoreductase that facilitates the oxidation of the methyl group to a carboxyl group at the C-28 position of beta-amyrin, resulting in the formation of oleanolic acid (PubMed:39043959). Catalyzes also the subsequent oxidation of the methyl group to a&lt; carboxyl group at the C-16 alpha position of oleanolic acid, resulting in the formation of echinocystic acid (PubMed:39043959).</text>
</comment>
<comment type="catalytic activity">
    <reaction evidence="4">
        <text>beta-amyrin + 3 reduced [NADPH--hemoprotein reductase] + 3 O2 = oleanolate + 3 oxidized [NADPH--hemoprotein reductase] + 4 H2O + 4 H(+)</text>
        <dbReference type="Rhea" id="RHEA:43068"/>
        <dbReference type="Rhea" id="RHEA-COMP:11964"/>
        <dbReference type="Rhea" id="RHEA-COMP:11965"/>
        <dbReference type="ChEBI" id="CHEBI:10352"/>
        <dbReference type="ChEBI" id="CHEBI:15377"/>
        <dbReference type="ChEBI" id="CHEBI:15378"/>
        <dbReference type="ChEBI" id="CHEBI:15379"/>
        <dbReference type="ChEBI" id="CHEBI:57618"/>
        <dbReference type="ChEBI" id="CHEBI:58210"/>
        <dbReference type="ChEBI" id="CHEBI:82828"/>
        <dbReference type="EC" id="1.14.14.126"/>
    </reaction>
    <physiologicalReaction direction="left-to-right" evidence="4">
        <dbReference type="Rhea" id="RHEA:43069"/>
    </physiologicalReaction>
</comment>
<comment type="cofactor">
    <cofactor evidence="1">
        <name>heme</name>
        <dbReference type="ChEBI" id="CHEBI:30413"/>
    </cofactor>
</comment>
<comment type="pathway">
    <text evidence="4">Secondary metabolite biosynthesis; terpenoid biosynthesis.</text>
</comment>
<comment type="subcellular location">
    <subcellularLocation>
        <location evidence="2">Membrane</location>
        <topology evidence="2">Single-pass type II membrane protein</topology>
    </subcellularLocation>
</comment>
<comment type="tissue specificity">
    <text evidence="4">Mainly expressed in flowers and flower buds, to a lesser extent in young leaves and, at low levels, in old leaves, stems and roots.</text>
</comment>
<comment type="biotechnology">
    <text evidence="5">Soapwort saponins possess anticancer properties and are also being explored as enhancers for endosomal escape in targeted tumor therapies (PubMed:39043959). They may also serve as precursors for vaccine adjuvants (PubMed:39043959).</text>
</comment>
<comment type="similarity">
    <text evidence="6">Belongs to the cytochrome P450 family.</text>
</comment>
<evidence type="ECO:0000250" key="1">
    <source>
        <dbReference type="UniProtKB" id="Q94IP1"/>
    </source>
</evidence>
<evidence type="ECO:0000255" key="2"/>
<evidence type="ECO:0000255" key="3">
    <source>
        <dbReference type="PROSITE-ProRule" id="PRU00498"/>
    </source>
</evidence>
<evidence type="ECO:0000269" key="4">
    <source>
    </source>
</evidence>
<evidence type="ECO:0000303" key="5">
    <source>
    </source>
</evidence>
<evidence type="ECO:0000305" key="6"/>
<evidence type="ECO:0000312" key="7">
    <source>
        <dbReference type="EMBL" id="KAK9699696.1"/>
    </source>
</evidence>
<evidence type="ECO:0000312" key="8">
    <source>
        <dbReference type="EMBL" id="WWM48155.1"/>
    </source>
</evidence>
<accession>A0AAW1JA93</accession>
<keyword id="KW-0325">Glycoprotein</keyword>
<keyword id="KW-0349">Heme</keyword>
<keyword id="KW-0408">Iron</keyword>
<keyword id="KW-0472">Membrane</keyword>
<keyword id="KW-0479">Metal-binding</keyword>
<keyword id="KW-0503">Monooxygenase</keyword>
<keyword id="KW-0560">Oxidoreductase</keyword>
<keyword id="KW-0735">Signal-anchor</keyword>
<keyword id="KW-0812">Transmembrane</keyword>
<keyword id="KW-1133">Transmembrane helix</keyword>
<dbReference type="EC" id="1.14.14.126" evidence="4"/>
<dbReference type="EC" id="1.14.14.-" evidence="4"/>
<dbReference type="EMBL" id="OR426402">
    <property type="protein sequence ID" value="WWM48155.1"/>
    <property type="molecule type" value="mRNA"/>
</dbReference>
<dbReference type="EMBL" id="JBDFQZ010000008">
    <property type="protein sequence ID" value="KAK9699696.1"/>
    <property type="molecule type" value="Genomic_DNA"/>
</dbReference>
<dbReference type="UniPathway" id="UPA00213"/>
<dbReference type="Proteomes" id="UP001443914">
    <property type="component" value="Unassembled WGS sequence"/>
</dbReference>
<dbReference type="GO" id="GO:0016020">
    <property type="term" value="C:membrane"/>
    <property type="evidence" value="ECO:0007669"/>
    <property type="project" value="UniProtKB-SubCell"/>
</dbReference>
<dbReference type="GO" id="GO:0102373">
    <property type="term" value="F:beta-amyrin 28-monooxygenase activity"/>
    <property type="evidence" value="ECO:0000314"/>
    <property type="project" value="UniProtKB"/>
</dbReference>
<dbReference type="GO" id="GO:0020037">
    <property type="term" value="F:heme binding"/>
    <property type="evidence" value="ECO:0007669"/>
    <property type="project" value="InterPro"/>
</dbReference>
<dbReference type="GO" id="GO:0005506">
    <property type="term" value="F:iron ion binding"/>
    <property type="evidence" value="ECO:0007669"/>
    <property type="project" value="InterPro"/>
</dbReference>
<dbReference type="GO" id="GO:0004497">
    <property type="term" value="F:monooxygenase activity"/>
    <property type="evidence" value="ECO:0000314"/>
    <property type="project" value="UniProtKB"/>
</dbReference>
<dbReference type="GO" id="GO:0016135">
    <property type="term" value="P:saponin biosynthetic process"/>
    <property type="evidence" value="ECO:0000314"/>
    <property type="project" value="UniProtKB"/>
</dbReference>
<dbReference type="GO" id="GO:0016125">
    <property type="term" value="P:sterol metabolic process"/>
    <property type="evidence" value="ECO:0007669"/>
    <property type="project" value="TreeGrafter"/>
</dbReference>
<dbReference type="GO" id="GO:0016104">
    <property type="term" value="P:triterpenoid biosynthetic process"/>
    <property type="evidence" value="ECO:0000314"/>
    <property type="project" value="UniProtKB"/>
</dbReference>
<dbReference type="CDD" id="cd11043">
    <property type="entry name" value="CYP90-like"/>
    <property type="match status" value="1"/>
</dbReference>
<dbReference type="FunFam" id="1.10.630.10:FF:000022">
    <property type="entry name" value="Taxadiene 5-alpha hydroxylase"/>
    <property type="match status" value="1"/>
</dbReference>
<dbReference type="Gene3D" id="1.10.630.10">
    <property type="entry name" value="Cytochrome P450"/>
    <property type="match status" value="1"/>
</dbReference>
<dbReference type="InterPro" id="IPR001128">
    <property type="entry name" value="Cyt_P450"/>
</dbReference>
<dbReference type="InterPro" id="IPR017972">
    <property type="entry name" value="Cyt_P450_CS"/>
</dbReference>
<dbReference type="InterPro" id="IPR002401">
    <property type="entry name" value="Cyt_P450_E_grp-I"/>
</dbReference>
<dbReference type="InterPro" id="IPR036396">
    <property type="entry name" value="Cyt_P450_sf"/>
</dbReference>
<dbReference type="PANTHER" id="PTHR24286">
    <property type="entry name" value="CYTOCHROME P450 26"/>
    <property type="match status" value="1"/>
</dbReference>
<dbReference type="PANTHER" id="PTHR24286:SF349">
    <property type="entry name" value="CYTOCHROME P450 716A1-RELATED"/>
    <property type="match status" value="1"/>
</dbReference>
<dbReference type="Pfam" id="PF00067">
    <property type="entry name" value="p450"/>
    <property type="match status" value="1"/>
</dbReference>
<dbReference type="PRINTS" id="PR00463">
    <property type="entry name" value="EP450I"/>
</dbReference>
<dbReference type="PRINTS" id="PR00385">
    <property type="entry name" value="P450"/>
</dbReference>
<dbReference type="SUPFAM" id="SSF48264">
    <property type="entry name" value="Cytochrome P450"/>
    <property type="match status" value="1"/>
</dbReference>
<dbReference type="PROSITE" id="PS00086">
    <property type="entry name" value="CYTOCHROME_P450"/>
    <property type="match status" value="1"/>
</dbReference>
<protein>
    <recommendedName>
        <fullName evidence="6">Beta-amyrin 28-monooxygenase CYP716A379</fullName>
        <ecNumber evidence="4">1.14.14.126</ecNumber>
    </recommendedName>
    <alternativeName>
        <fullName evidence="5">Cytochrome P450 716A379</fullName>
        <shortName evidence="5">SoCYP716A379</shortName>
    </alternativeName>
    <alternativeName>
        <fullName evidence="6">Oleanolic acid 16-monooxygenase CYP716A379</fullName>
        <ecNumber evidence="4">1.14.14.-</ecNumber>
    </alternativeName>
</protein>
<feature type="chain" id="PRO_0000462355" description="Beta-amyrin 28-monooxygenase CYP716A379">
    <location>
        <begin position="1"/>
        <end position="502"/>
    </location>
</feature>
<feature type="transmembrane region" description="Helical; Signal-anchor for type II membrane protein" evidence="2">
    <location>
        <begin position="3"/>
        <end position="23"/>
    </location>
</feature>
<feature type="binding site" description="axial binding residue" evidence="1">
    <location>
        <position position="444"/>
    </location>
    <ligand>
        <name>heme</name>
        <dbReference type="ChEBI" id="CHEBI:30413"/>
    </ligand>
    <ligandPart>
        <name>Fe</name>
        <dbReference type="ChEBI" id="CHEBI:18248"/>
    </ligandPart>
</feature>
<feature type="glycosylation site" description="N-linked (GlcNAc...) asparagine" evidence="3">
    <location>
        <position position="88"/>
    </location>
</feature>
<feature type="glycosylation site" description="N-linked (GlcNAc...) asparagine" evidence="3">
    <location>
        <position position="181"/>
    </location>
</feature>
<organism>
    <name type="scientific">Saponaria officinalis</name>
    <name type="common">Common soapwort</name>
    <name type="synonym">Lychnis saponaria</name>
    <dbReference type="NCBI Taxonomy" id="3572"/>
    <lineage>
        <taxon>Eukaryota</taxon>
        <taxon>Viridiplantae</taxon>
        <taxon>Streptophyta</taxon>
        <taxon>Embryophyta</taxon>
        <taxon>Tracheophyta</taxon>
        <taxon>Spermatophyta</taxon>
        <taxon>Magnoliopsida</taxon>
        <taxon>eudicotyledons</taxon>
        <taxon>Gunneridae</taxon>
        <taxon>Pentapetalae</taxon>
        <taxon>Caryophyllales</taxon>
        <taxon>Caryophyllaceae</taxon>
        <taxon>Caryophylleae</taxon>
        <taxon>Saponaria</taxon>
    </lineage>
</organism>
<sequence>MELITLLSALLVLAIVSLSTFFVLYYNTPTKDGKTLPPGRMGWPFIGESYDFFAAGWKGKPESFIFDRLKKFAKGNLNGQFRTSLFGNKSIVVAGAAANKLLFSNEKKLVTMWWPPSIDKAFPSTAQLSANEEALLMRKFFPSFLIRREALQRYIPIMDDCTRRHFATGAWGPSDKIEAFNVTQDYTFWVACRVFMSIDAQEDPETVDSLFRHFNVLKAGIYSMHIDLPWTNFHHAMKASHAIRSAVEQIAKKRRAELAEGKAFPTQDMLSYMLETPITSAEDSKDGKAKYLNDADIGTKILGLLVGGHDTSSTVIAFFFKFMAENPHVYEAIYKEQMEVAATKAPGELLNWDDLQKMKYSWCAICEVMRLTPPVQGAFRQAITDFTHNGYLIPKGWKIYWSTHSTHRNPEIFPQPEKFDPTRFEGNGPPAFSFVPFGGGPRMCPGKEYARLQVLTFVHHIVTKFKWEQILPNEKIIVSPMPYPEKNLPLRMIARSESATLA</sequence>
<proteinExistence type="evidence at protein level"/>
<reference evidence="8" key="1">
    <citation type="journal article" date="2025" name="Nat. Chem. Biol.">
        <title>Unlocking saponin biosynthesis in soapwort.</title>
        <authorList>
            <person name="Jo S."/>
            <person name="El-Demerdash A."/>
            <person name="Owen C."/>
            <person name="Srivastava V."/>
            <person name="Wu D."/>
            <person name="Kikuchi S."/>
            <person name="Reed J."/>
            <person name="Hodgson H."/>
            <person name="Harkess A."/>
            <person name="Shu S."/>
            <person name="Plott C."/>
            <person name="Jenkins J."/>
            <person name="Williams M."/>
            <person name="Boston L.-B."/>
            <person name="Lacchini E."/>
            <person name="Qu T."/>
            <person name="Goossens A."/>
            <person name="Grimwood J."/>
            <person name="Schmutz J."/>
            <person name="Leebens-Mack J."/>
            <person name="Osbourn A."/>
        </authorList>
    </citation>
    <scope>NUCLEOTIDE SEQUENCE [MRNA]</scope>
    <scope>FUNCTION</scope>
    <scope>CATALYTIC ACTIVITY</scope>
    <scope>TISSUE SPECIFICITY</scope>
    <scope>PATHWAY</scope>
    <scope>BIOTECHNOLOGY</scope>
</reference>
<reference evidence="7" key="2">
    <citation type="submission" date="2024-03" db="EMBL/GenBank/DDBJ databases">
        <title>WGS assembly of Saponaria officinalis var. Norfolk2.</title>
        <authorList>
            <person name="Jenkins J."/>
            <person name="Shu S."/>
            <person name="Grimwood J."/>
            <person name="Barry K."/>
            <person name="Goodstein D."/>
            <person name="Schmutz J."/>
            <person name="Leebens-Mack J."/>
            <person name="Osbourn A."/>
        </authorList>
    </citation>
    <scope>NUCLEOTIDE SEQUENCE [LARGE SCALE GENOMIC DNA]</scope>
    <source>
        <strain>cv. Norfolk2</strain>
        <tissue>Leaf</tissue>
    </source>
</reference>
<gene>
    <name evidence="5" type="primary">CYP716A379</name>
    <name evidence="5" type="synonym">Saoffv11043486m</name>
    <name evidence="7" type="ORF">RND81_08G189800</name>
</gene>
<name>C7169_SAPOF</name>